<gene>
    <name evidence="1" type="primary">hisB</name>
    <name type="ordered locus">PTH_2536</name>
</gene>
<feature type="chain" id="PRO_0000336331" description="Imidazoleglycerol-phosphate dehydratase">
    <location>
        <begin position="1"/>
        <end position="195"/>
    </location>
</feature>
<accession>A5CZ77</accession>
<evidence type="ECO:0000255" key="1">
    <source>
        <dbReference type="HAMAP-Rule" id="MF_00076"/>
    </source>
</evidence>
<comment type="catalytic activity">
    <reaction evidence="1">
        <text>D-erythro-1-(imidazol-4-yl)glycerol 3-phosphate = 3-(imidazol-4-yl)-2-oxopropyl phosphate + H2O</text>
        <dbReference type="Rhea" id="RHEA:11040"/>
        <dbReference type="ChEBI" id="CHEBI:15377"/>
        <dbReference type="ChEBI" id="CHEBI:57766"/>
        <dbReference type="ChEBI" id="CHEBI:58278"/>
        <dbReference type="EC" id="4.2.1.19"/>
    </reaction>
</comment>
<comment type="pathway">
    <text evidence="1">Amino-acid biosynthesis; L-histidine biosynthesis; L-histidine from 5-phospho-alpha-D-ribose 1-diphosphate: step 6/9.</text>
</comment>
<comment type="subcellular location">
    <subcellularLocation>
        <location evidence="1">Cytoplasm</location>
    </subcellularLocation>
</comment>
<comment type="similarity">
    <text evidence="1">Belongs to the imidazoleglycerol-phosphate dehydratase family.</text>
</comment>
<sequence length="195" mass="20998">MSERTGLVTRKTRETEVNVTLNLDGTGVYWVHTGMPFFDHMLQTFSKHSLFDLELTAQGDLAVDGHHTVEDAGVCLGQAIKKALGDKNGINRFGHAIVPMDDALTMAAVDLSGRGLLVFDAAMPSPRVGDFDTELVEEFFRALAVNGEFNLHIRLLAGSNTHHIIESIFKAVACSLKEAAGMSGGTGIPSTKDTL</sequence>
<name>HIS7_PELTS</name>
<reference key="1">
    <citation type="journal article" date="2008" name="Genome Res.">
        <title>The genome of Pelotomaculum thermopropionicum reveals niche-associated evolution in anaerobic microbiota.</title>
        <authorList>
            <person name="Kosaka T."/>
            <person name="Kato S."/>
            <person name="Shimoyama T."/>
            <person name="Ishii S."/>
            <person name="Abe T."/>
            <person name="Watanabe K."/>
        </authorList>
    </citation>
    <scope>NUCLEOTIDE SEQUENCE [LARGE SCALE GENOMIC DNA]</scope>
    <source>
        <strain>DSM 13744 / JCM 10971 / SI</strain>
    </source>
</reference>
<proteinExistence type="inferred from homology"/>
<dbReference type="EC" id="4.2.1.19" evidence="1"/>
<dbReference type="EMBL" id="AP009389">
    <property type="protein sequence ID" value="BAF60717.1"/>
    <property type="molecule type" value="Genomic_DNA"/>
</dbReference>
<dbReference type="SMR" id="A5CZ77"/>
<dbReference type="STRING" id="370438.PTH_2536"/>
<dbReference type="KEGG" id="pth:PTH_2536"/>
<dbReference type="eggNOG" id="COG0131">
    <property type="taxonomic scope" value="Bacteria"/>
</dbReference>
<dbReference type="HOGENOM" id="CLU_044308_3_0_9"/>
<dbReference type="UniPathway" id="UPA00031">
    <property type="reaction ID" value="UER00011"/>
</dbReference>
<dbReference type="Proteomes" id="UP000006556">
    <property type="component" value="Chromosome"/>
</dbReference>
<dbReference type="GO" id="GO:0005737">
    <property type="term" value="C:cytoplasm"/>
    <property type="evidence" value="ECO:0007669"/>
    <property type="project" value="UniProtKB-SubCell"/>
</dbReference>
<dbReference type="GO" id="GO:0004424">
    <property type="term" value="F:imidazoleglycerol-phosphate dehydratase activity"/>
    <property type="evidence" value="ECO:0007669"/>
    <property type="project" value="UniProtKB-UniRule"/>
</dbReference>
<dbReference type="GO" id="GO:0000105">
    <property type="term" value="P:L-histidine biosynthetic process"/>
    <property type="evidence" value="ECO:0007669"/>
    <property type="project" value="UniProtKB-UniRule"/>
</dbReference>
<dbReference type="CDD" id="cd07914">
    <property type="entry name" value="IGPD"/>
    <property type="match status" value="1"/>
</dbReference>
<dbReference type="FunFam" id="3.30.230.40:FF:000001">
    <property type="entry name" value="Imidazoleglycerol-phosphate dehydratase HisB"/>
    <property type="match status" value="1"/>
</dbReference>
<dbReference type="FunFam" id="3.30.230.40:FF:000003">
    <property type="entry name" value="Imidazoleglycerol-phosphate dehydratase HisB"/>
    <property type="match status" value="1"/>
</dbReference>
<dbReference type="Gene3D" id="3.30.230.40">
    <property type="entry name" value="Imidazole glycerol phosphate dehydratase, domain 1"/>
    <property type="match status" value="2"/>
</dbReference>
<dbReference type="HAMAP" id="MF_00076">
    <property type="entry name" value="HisB"/>
    <property type="match status" value="1"/>
</dbReference>
<dbReference type="InterPro" id="IPR038494">
    <property type="entry name" value="IGPD_sf"/>
</dbReference>
<dbReference type="InterPro" id="IPR000807">
    <property type="entry name" value="ImidazoleglycerolP_deHydtase"/>
</dbReference>
<dbReference type="InterPro" id="IPR020565">
    <property type="entry name" value="ImidazoleglycerP_deHydtase_CS"/>
</dbReference>
<dbReference type="InterPro" id="IPR020568">
    <property type="entry name" value="Ribosomal_Su5_D2-typ_SF"/>
</dbReference>
<dbReference type="NCBIfam" id="NF002111">
    <property type="entry name" value="PRK00951.2-1"/>
    <property type="match status" value="1"/>
</dbReference>
<dbReference type="NCBIfam" id="NF002114">
    <property type="entry name" value="PRK00951.2-4"/>
    <property type="match status" value="1"/>
</dbReference>
<dbReference type="PANTHER" id="PTHR23133:SF2">
    <property type="entry name" value="IMIDAZOLEGLYCEROL-PHOSPHATE DEHYDRATASE"/>
    <property type="match status" value="1"/>
</dbReference>
<dbReference type="PANTHER" id="PTHR23133">
    <property type="entry name" value="IMIDAZOLEGLYCEROL-PHOSPHATE DEHYDRATASE HIS7"/>
    <property type="match status" value="1"/>
</dbReference>
<dbReference type="Pfam" id="PF00475">
    <property type="entry name" value="IGPD"/>
    <property type="match status" value="1"/>
</dbReference>
<dbReference type="SUPFAM" id="SSF54211">
    <property type="entry name" value="Ribosomal protein S5 domain 2-like"/>
    <property type="match status" value="2"/>
</dbReference>
<dbReference type="PROSITE" id="PS00954">
    <property type="entry name" value="IGP_DEHYDRATASE_1"/>
    <property type="match status" value="1"/>
</dbReference>
<dbReference type="PROSITE" id="PS00955">
    <property type="entry name" value="IGP_DEHYDRATASE_2"/>
    <property type="match status" value="1"/>
</dbReference>
<organism>
    <name type="scientific">Pelotomaculum thermopropionicum (strain DSM 13744 / JCM 10971 / SI)</name>
    <dbReference type="NCBI Taxonomy" id="370438"/>
    <lineage>
        <taxon>Bacteria</taxon>
        <taxon>Bacillati</taxon>
        <taxon>Bacillota</taxon>
        <taxon>Clostridia</taxon>
        <taxon>Eubacteriales</taxon>
        <taxon>Desulfotomaculaceae</taxon>
        <taxon>Pelotomaculum</taxon>
    </lineage>
</organism>
<keyword id="KW-0028">Amino-acid biosynthesis</keyword>
<keyword id="KW-0963">Cytoplasm</keyword>
<keyword id="KW-0368">Histidine biosynthesis</keyword>
<keyword id="KW-0456">Lyase</keyword>
<keyword id="KW-1185">Reference proteome</keyword>
<protein>
    <recommendedName>
        <fullName evidence="1">Imidazoleglycerol-phosphate dehydratase</fullName>
        <shortName evidence="1">IGPD</shortName>
        <ecNumber evidence="1">4.2.1.19</ecNumber>
    </recommendedName>
</protein>